<keyword id="KW-0067">ATP-binding</keyword>
<keyword id="KW-0963">Cytoplasm</keyword>
<keyword id="KW-0227">DNA damage</keyword>
<keyword id="KW-0233">DNA recombination</keyword>
<keyword id="KW-0234">DNA repair</keyword>
<keyword id="KW-0238">DNA-binding</keyword>
<keyword id="KW-0378">Hydrolase</keyword>
<keyword id="KW-0547">Nucleotide-binding</keyword>
<comment type="function">
    <text evidence="1">The RuvA-RuvB-RuvC complex processes Holliday junction (HJ) DNA during genetic recombination and DNA repair, while the RuvA-RuvB complex plays an important role in the rescue of blocked DNA replication forks via replication fork reversal (RFR). RuvA specifically binds to HJ cruciform DNA, conferring on it an open structure. The RuvB hexamer acts as an ATP-dependent pump, pulling dsDNA into and through the RuvAB complex. RuvB forms 2 homohexamers on either side of HJ DNA bound by 1 or 2 RuvA tetramers; 4 subunits per hexamer contact DNA at a time. Coordinated motions by a converter formed by DNA-disengaged RuvB subunits stimulates ATP hydrolysis and nucleotide exchange. Immobilization of the converter enables RuvB to convert the ATP-contained energy into a lever motion, pulling 2 nucleotides of DNA out of the RuvA tetramer per ATP hydrolyzed, thus driving DNA branch migration. The RuvB motors rotate together with the DNA substrate, which together with the progressing nucleotide cycle form the mechanistic basis for DNA recombination by continuous HJ branch migration. Branch migration allows RuvC to scan DNA until it finds its consensus sequence, where it cleaves and resolves cruciform DNA.</text>
</comment>
<comment type="catalytic activity">
    <reaction evidence="1">
        <text>ATP + H2O = ADP + phosphate + H(+)</text>
        <dbReference type="Rhea" id="RHEA:13065"/>
        <dbReference type="ChEBI" id="CHEBI:15377"/>
        <dbReference type="ChEBI" id="CHEBI:15378"/>
        <dbReference type="ChEBI" id="CHEBI:30616"/>
        <dbReference type="ChEBI" id="CHEBI:43474"/>
        <dbReference type="ChEBI" id="CHEBI:456216"/>
    </reaction>
</comment>
<comment type="subunit">
    <text evidence="1">Homohexamer. Forms an RuvA(8)-RuvB(12)-Holliday junction (HJ) complex. HJ DNA is sandwiched between 2 RuvA tetramers; dsDNA enters through RuvA and exits via RuvB. An RuvB hexamer assembles on each DNA strand where it exits the tetramer. Each RuvB hexamer is contacted by two RuvA subunits (via domain III) on 2 adjacent RuvB subunits; this complex drives branch migration. In the full resolvosome a probable DNA-RuvA(4)-RuvB(12)-RuvC(2) complex forms which resolves the HJ.</text>
</comment>
<comment type="subcellular location">
    <subcellularLocation>
        <location evidence="1">Cytoplasm</location>
    </subcellularLocation>
</comment>
<comment type="domain">
    <text evidence="1">Has 3 domains, the large (RuvB-L) and small ATPase (RuvB-S) domains and the C-terminal head (RuvB-H) domain. The head domain binds DNA, while the ATPase domains jointly bind ATP, ADP or are empty depending on the state of the subunit in the translocation cycle. During a single DNA translocation step the structure of each domain remains the same, but their relative positions change.</text>
</comment>
<comment type="similarity">
    <text evidence="1">Belongs to the RuvB family.</text>
</comment>
<evidence type="ECO:0000255" key="1">
    <source>
        <dbReference type="HAMAP-Rule" id="MF_00016"/>
    </source>
</evidence>
<accession>Q1CJG5</accession>
<accession>C4GSG1</accession>
<gene>
    <name evidence="1" type="primary">ruvB</name>
    <name type="ordered locus">YPN_1535</name>
    <name type="ORF">YP516_1703</name>
</gene>
<organism>
    <name type="scientific">Yersinia pestis bv. Antiqua (strain Nepal516)</name>
    <dbReference type="NCBI Taxonomy" id="377628"/>
    <lineage>
        <taxon>Bacteria</taxon>
        <taxon>Pseudomonadati</taxon>
        <taxon>Pseudomonadota</taxon>
        <taxon>Gammaproteobacteria</taxon>
        <taxon>Enterobacterales</taxon>
        <taxon>Yersiniaceae</taxon>
        <taxon>Yersinia</taxon>
    </lineage>
</organism>
<proteinExistence type="inferred from homology"/>
<name>RUVB_YERPN</name>
<protein>
    <recommendedName>
        <fullName evidence="1">Holliday junction branch migration complex subunit RuvB</fullName>
        <ecNumber evidence="1">3.6.4.-</ecNumber>
    </recommendedName>
</protein>
<dbReference type="EC" id="3.6.4.-" evidence="1"/>
<dbReference type="EMBL" id="CP000305">
    <property type="protein sequence ID" value="ABG17865.1"/>
    <property type="molecule type" value="Genomic_DNA"/>
</dbReference>
<dbReference type="EMBL" id="ACNQ01000009">
    <property type="protein sequence ID" value="EEO76971.1"/>
    <property type="molecule type" value="Genomic_DNA"/>
</dbReference>
<dbReference type="RefSeq" id="WP_002211198.1">
    <property type="nucleotide sequence ID" value="NZ_ACNQ01000009.1"/>
</dbReference>
<dbReference type="SMR" id="Q1CJG5"/>
<dbReference type="GeneID" id="57976603"/>
<dbReference type="KEGG" id="ypn:YPN_1535"/>
<dbReference type="HOGENOM" id="CLU_055599_1_0_6"/>
<dbReference type="Proteomes" id="UP000008936">
    <property type="component" value="Chromosome"/>
</dbReference>
<dbReference type="GO" id="GO:0005737">
    <property type="term" value="C:cytoplasm"/>
    <property type="evidence" value="ECO:0007669"/>
    <property type="project" value="UniProtKB-SubCell"/>
</dbReference>
<dbReference type="GO" id="GO:0048476">
    <property type="term" value="C:Holliday junction resolvase complex"/>
    <property type="evidence" value="ECO:0007669"/>
    <property type="project" value="UniProtKB-UniRule"/>
</dbReference>
<dbReference type="GO" id="GO:0005524">
    <property type="term" value="F:ATP binding"/>
    <property type="evidence" value="ECO:0007669"/>
    <property type="project" value="UniProtKB-UniRule"/>
</dbReference>
<dbReference type="GO" id="GO:0016887">
    <property type="term" value="F:ATP hydrolysis activity"/>
    <property type="evidence" value="ECO:0007669"/>
    <property type="project" value="InterPro"/>
</dbReference>
<dbReference type="GO" id="GO:0000400">
    <property type="term" value="F:four-way junction DNA binding"/>
    <property type="evidence" value="ECO:0007669"/>
    <property type="project" value="UniProtKB-UniRule"/>
</dbReference>
<dbReference type="GO" id="GO:0009378">
    <property type="term" value="F:four-way junction helicase activity"/>
    <property type="evidence" value="ECO:0007669"/>
    <property type="project" value="InterPro"/>
</dbReference>
<dbReference type="GO" id="GO:0006310">
    <property type="term" value="P:DNA recombination"/>
    <property type="evidence" value="ECO:0007669"/>
    <property type="project" value="UniProtKB-UniRule"/>
</dbReference>
<dbReference type="GO" id="GO:0006281">
    <property type="term" value="P:DNA repair"/>
    <property type="evidence" value="ECO:0007669"/>
    <property type="project" value="UniProtKB-UniRule"/>
</dbReference>
<dbReference type="CDD" id="cd00009">
    <property type="entry name" value="AAA"/>
    <property type="match status" value="1"/>
</dbReference>
<dbReference type="FunFam" id="1.10.10.10:FF:000086">
    <property type="entry name" value="Holliday junction ATP-dependent DNA helicase RuvB"/>
    <property type="match status" value="1"/>
</dbReference>
<dbReference type="FunFam" id="1.10.8.60:FF:000023">
    <property type="entry name" value="Holliday junction ATP-dependent DNA helicase RuvB"/>
    <property type="match status" value="1"/>
</dbReference>
<dbReference type="FunFam" id="3.40.50.300:FF:000073">
    <property type="entry name" value="Holliday junction ATP-dependent DNA helicase RuvB"/>
    <property type="match status" value="1"/>
</dbReference>
<dbReference type="Gene3D" id="1.10.8.60">
    <property type="match status" value="1"/>
</dbReference>
<dbReference type="Gene3D" id="3.40.50.300">
    <property type="entry name" value="P-loop containing nucleotide triphosphate hydrolases"/>
    <property type="match status" value="1"/>
</dbReference>
<dbReference type="Gene3D" id="1.10.10.10">
    <property type="entry name" value="Winged helix-like DNA-binding domain superfamily/Winged helix DNA-binding domain"/>
    <property type="match status" value="1"/>
</dbReference>
<dbReference type="HAMAP" id="MF_00016">
    <property type="entry name" value="DNA_HJ_migration_RuvB"/>
    <property type="match status" value="1"/>
</dbReference>
<dbReference type="InterPro" id="IPR003593">
    <property type="entry name" value="AAA+_ATPase"/>
</dbReference>
<dbReference type="InterPro" id="IPR041445">
    <property type="entry name" value="AAA_lid_4"/>
</dbReference>
<dbReference type="InterPro" id="IPR004605">
    <property type="entry name" value="DNA_helicase_Holl-junc_RuvB"/>
</dbReference>
<dbReference type="InterPro" id="IPR027417">
    <property type="entry name" value="P-loop_NTPase"/>
</dbReference>
<dbReference type="InterPro" id="IPR008824">
    <property type="entry name" value="RuvB-like_N"/>
</dbReference>
<dbReference type="InterPro" id="IPR008823">
    <property type="entry name" value="RuvB_C"/>
</dbReference>
<dbReference type="InterPro" id="IPR036388">
    <property type="entry name" value="WH-like_DNA-bd_sf"/>
</dbReference>
<dbReference type="InterPro" id="IPR036390">
    <property type="entry name" value="WH_DNA-bd_sf"/>
</dbReference>
<dbReference type="NCBIfam" id="NF000868">
    <property type="entry name" value="PRK00080.1"/>
    <property type="match status" value="1"/>
</dbReference>
<dbReference type="NCBIfam" id="TIGR00635">
    <property type="entry name" value="ruvB"/>
    <property type="match status" value="1"/>
</dbReference>
<dbReference type="PANTHER" id="PTHR42848">
    <property type="match status" value="1"/>
</dbReference>
<dbReference type="PANTHER" id="PTHR42848:SF1">
    <property type="entry name" value="HOLLIDAY JUNCTION BRANCH MIGRATION COMPLEX SUBUNIT RUVB"/>
    <property type="match status" value="1"/>
</dbReference>
<dbReference type="Pfam" id="PF17864">
    <property type="entry name" value="AAA_lid_4"/>
    <property type="match status" value="1"/>
</dbReference>
<dbReference type="Pfam" id="PF05491">
    <property type="entry name" value="RuvB_C"/>
    <property type="match status" value="1"/>
</dbReference>
<dbReference type="Pfam" id="PF05496">
    <property type="entry name" value="RuvB_N"/>
    <property type="match status" value="1"/>
</dbReference>
<dbReference type="SMART" id="SM00382">
    <property type="entry name" value="AAA"/>
    <property type="match status" value="1"/>
</dbReference>
<dbReference type="SUPFAM" id="SSF52540">
    <property type="entry name" value="P-loop containing nucleoside triphosphate hydrolases"/>
    <property type="match status" value="1"/>
</dbReference>
<dbReference type="SUPFAM" id="SSF46785">
    <property type="entry name" value="Winged helix' DNA-binding domain"/>
    <property type="match status" value="1"/>
</dbReference>
<reference key="1">
    <citation type="journal article" date="2006" name="J. Bacteriol.">
        <title>Complete genome sequence of Yersinia pestis strains Antiqua and Nepal516: evidence of gene reduction in an emerging pathogen.</title>
        <authorList>
            <person name="Chain P.S.G."/>
            <person name="Hu P."/>
            <person name="Malfatti S.A."/>
            <person name="Radnedge L."/>
            <person name="Larimer F."/>
            <person name="Vergez L.M."/>
            <person name="Worsham P."/>
            <person name="Chu M.C."/>
            <person name="Andersen G.L."/>
        </authorList>
    </citation>
    <scope>NUCLEOTIDE SEQUENCE [LARGE SCALE GENOMIC DNA]</scope>
    <source>
        <strain>Nepal516</strain>
    </source>
</reference>
<reference key="2">
    <citation type="submission" date="2009-04" db="EMBL/GenBank/DDBJ databases">
        <title>Yersinia pestis Nepal516A whole genome shotgun sequencing project.</title>
        <authorList>
            <person name="Plunkett G. III"/>
            <person name="Anderson B.D."/>
            <person name="Baumler D.J."/>
            <person name="Burland V."/>
            <person name="Cabot E.L."/>
            <person name="Glasner J.D."/>
            <person name="Mau B."/>
            <person name="Neeno-Eckwall E."/>
            <person name="Perna N.T."/>
            <person name="Munk A.C."/>
            <person name="Tapia R."/>
            <person name="Green L.D."/>
            <person name="Rogers Y.C."/>
            <person name="Detter J.C."/>
            <person name="Bruce D.C."/>
            <person name="Brettin T.S."/>
        </authorList>
    </citation>
    <scope>NUCLEOTIDE SEQUENCE [LARGE SCALE GENOMIC DNA]</scope>
    <source>
        <strain>Nepal516</strain>
    </source>
</reference>
<sequence length="334" mass="37050">MIEADRLISAAVINDEESIDRAIRPKLLTEYVGQPHVREQMEIFIQAAKQRGDALDHVLIFGPPGLGKTTLANIIANEMGVNLRTTSGPVLEKAGDLAAMLTNLEPHDVLFIDEIHRLSPVVEEILYPAMEDYQLDIMIGEGPAARSIKLDLPPFTLIGATTRAGSLTSPLRDRFGIVQRLEFYQVADLEHIVSRSAKCLGLELTPEGAHQLARRSRGTPRITNRLLRRVRDFAEVRADGAINGEVAMKALDMLNVDAEGFDFMDRKLLLAVIDKFMGGPVGLDNLAAAIGEERETIEDVLEPYLIQQGFIQRTPRGRIATNHAYKHFGITREE</sequence>
<feature type="chain" id="PRO_1000001501" description="Holliday junction branch migration complex subunit RuvB">
    <location>
        <begin position="1"/>
        <end position="334"/>
    </location>
</feature>
<feature type="region of interest" description="Large ATPase domain (RuvB-L)" evidence="1">
    <location>
        <begin position="4"/>
        <end position="184"/>
    </location>
</feature>
<feature type="region of interest" description="Small ATPAse domain (RuvB-S)" evidence="1">
    <location>
        <begin position="185"/>
        <end position="255"/>
    </location>
</feature>
<feature type="region of interest" description="Head domain (RuvB-H)" evidence="1">
    <location>
        <begin position="258"/>
        <end position="334"/>
    </location>
</feature>
<feature type="binding site" evidence="1">
    <location>
        <position position="23"/>
    </location>
    <ligand>
        <name>ATP</name>
        <dbReference type="ChEBI" id="CHEBI:30616"/>
    </ligand>
</feature>
<feature type="binding site" evidence="1">
    <location>
        <position position="24"/>
    </location>
    <ligand>
        <name>ATP</name>
        <dbReference type="ChEBI" id="CHEBI:30616"/>
    </ligand>
</feature>
<feature type="binding site" evidence="1">
    <location>
        <position position="65"/>
    </location>
    <ligand>
        <name>ATP</name>
        <dbReference type="ChEBI" id="CHEBI:30616"/>
    </ligand>
</feature>
<feature type="binding site" evidence="1">
    <location>
        <position position="68"/>
    </location>
    <ligand>
        <name>ATP</name>
        <dbReference type="ChEBI" id="CHEBI:30616"/>
    </ligand>
</feature>
<feature type="binding site" evidence="1">
    <location>
        <position position="69"/>
    </location>
    <ligand>
        <name>ATP</name>
        <dbReference type="ChEBI" id="CHEBI:30616"/>
    </ligand>
</feature>
<feature type="binding site" evidence="1">
    <location>
        <position position="69"/>
    </location>
    <ligand>
        <name>Mg(2+)</name>
        <dbReference type="ChEBI" id="CHEBI:18420"/>
    </ligand>
</feature>
<feature type="binding site" evidence="1">
    <location>
        <position position="70"/>
    </location>
    <ligand>
        <name>ATP</name>
        <dbReference type="ChEBI" id="CHEBI:30616"/>
    </ligand>
</feature>
<feature type="binding site" evidence="1">
    <location>
        <begin position="131"/>
        <end position="133"/>
    </location>
    <ligand>
        <name>ATP</name>
        <dbReference type="ChEBI" id="CHEBI:30616"/>
    </ligand>
</feature>
<feature type="binding site" evidence="1">
    <location>
        <position position="174"/>
    </location>
    <ligand>
        <name>ATP</name>
        <dbReference type="ChEBI" id="CHEBI:30616"/>
    </ligand>
</feature>
<feature type="binding site" evidence="1">
    <location>
        <position position="184"/>
    </location>
    <ligand>
        <name>ATP</name>
        <dbReference type="ChEBI" id="CHEBI:30616"/>
    </ligand>
</feature>
<feature type="binding site" evidence="1">
    <location>
        <position position="221"/>
    </location>
    <ligand>
        <name>ATP</name>
        <dbReference type="ChEBI" id="CHEBI:30616"/>
    </ligand>
</feature>
<feature type="binding site" evidence="1">
    <location>
        <position position="294"/>
    </location>
    <ligand>
        <name>DNA</name>
        <dbReference type="ChEBI" id="CHEBI:16991"/>
    </ligand>
</feature>
<feature type="binding site" evidence="1">
    <location>
        <position position="313"/>
    </location>
    <ligand>
        <name>DNA</name>
        <dbReference type="ChEBI" id="CHEBI:16991"/>
    </ligand>
</feature>
<feature type="binding site" evidence="1">
    <location>
        <position position="318"/>
    </location>
    <ligand>
        <name>DNA</name>
        <dbReference type="ChEBI" id="CHEBI:16991"/>
    </ligand>
</feature>